<organism>
    <name type="scientific">Hordeum vulgare</name>
    <name type="common">Barley</name>
    <dbReference type="NCBI Taxonomy" id="4513"/>
    <lineage>
        <taxon>Eukaryota</taxon>
        <taxon>Viridiplantae</taxon>
        <taxon>Streptophyta</taxon>
        <taxon>Embryophyta</taxon>
        <taxon>Tracheophyta</taxon>
        <taxon>Spermatophyta</taxon>
        <taxon>Magnoliopsida</taxon>
        <taxon>Liliopsida</taxon>
        <taxon>Poales</taxon>
        <taxon>Poaceae</taxon>
        <taxon>BOP clade</taxon>
        <taxon>Pooideae</taxon>
        <taxon>Triticodae</taxon>
        <taxon>Triticeae</taxon>
        <taxon>Hordeinae</taxon>
        <taxon>Hordeum</taxon>
    </lineage>
</organism>
<protein>
    <recommendedName>
        <fullName evidence="1">ATP synthase subunit b, chloroplastic</fullName>
    </recommendedName>
    <alternativeName>
        <fullName evidence="1">ATP synthase F(0) sector subunit b</fullName>
    </alternativeName>
    <alternativeName>
        <fullName evidence="1">ATPase subunit I</fullName>
    </alternativeName>
</protein>
<reference key="1">
    <citation type="journal article" date="2007" name="Theor. Appl. Genet.">
        <title>Complete chloroplast genome sequences of Hordeum vulgare, Sorghum bicolor and Agrostis stolonifera, and comparative analyses with other grass genomes.</title>
        <authorList>
            <person name="Saski C."/>
            <person name="Lee S.-B."/>
            <person name="Fjellheim S."/>
            <person name="Guda C."/>
            <person name="Jansen R.K."/>
            <person name="Luo H."/>
            <person name="Tomkins J."/>
            <person name="Rognli O.A."/>
            <person name="Daniell H."/>
            <person name="Clarke J.L."/>
        </authorList>
    </citation>
    <scope>NUCLEOTIDE SEQUENCE [LARGE SCALE GENOMIC DNA]</scope>
    <source>
        <strain>cv. Morex</strain>
    </source>
</reference>
<accession>A1E9I7</accession>
<sequence length="183" mass="20977">MKNVTHSFVFLAHWPSAGSFGLNTDILATNLINLTVVVGVLIFFGKGVLKDLLDNRKQRILSTIRNSEELRRGTIEQLEKARIRLQKVELEADEYRMNGYSEIEREKANLINATSISLEQLEKSKNETLYFEKQRAMNQVRQRVFQQAVQGALGTLNSCLNTELHFRTIRANIGILGSLEWKR</sequence>
<gene>
    <name evidence="1" type="primary">atpF</name>
</gene>
<geneLocation type="chloroplast"/>
<evidence type="ECO:0000255" key="1">
    <source>
        <dbReference type="HAMAP-Rule" id="MF_01398"/>
    </source>
</evidence>
<comment type="function">
    <text evidence="1">F(1)F(0) ATP synthase produces ATP from ADP in the presence of a proton or sodium gradient. F-type ATPases consist of two structural domains, F(1) containing the extramembraneous catalytic core and F(0) containing the membrane proton channel, linked together by a central stalk and a peripheral stalk. During catalysis, ATP synthesis in the catalytic domain of F(1) is coupled via a rotary mechanism of the central stalk subunits to proton translocation.</text>
</comment>
<comment type="function">
    <text evidence="1">Component of the F(0) channel, it forms part of the peripheral stalk, linking F(1) to F(0).</text>
</comment>
<comment type="subunit">
    <text evidence="1">F-type ATPases have 2 components, F(1) - the catalytic core - and F(0) - the membrane proton channel. F(1) has five subunits: alpha(3), beta(3), gamma(1), delta(1), epsilon(1). F(0) has four main subunits: a(1), b(1), b'(1) and c(10-14). The alpha and beta chains form an alternating ring which encloses part of the gamma chain. F(1) is attached to F(0) by a central stalk formed by the gamma and epsilon chains, while a peripheral stalk is formed by the delta, b and b' chains.</text>
</comment>
<comment type="subcellular location">
    <subcellularLocation>
        <location evidence="1">Plastid</location>
        <location evidence="1">Chloroplast thylakoid membrane</location>
        <topology evidence="1">Single-pass membrane protein</topology>
    </subcellularLocation>
</comment>
<comment type="miscellaneous">
    <text>In plastids the F-type ATPase is also known as CF(1)CF(0).</text>
</comment>
<comment type="similarity">
    <text evidence="1">Belongs to the ATPase B chain family.</text>
</comment>
<keyword id="KW-0066">ATP synthesis</keyword>
<keyword id="KW-0138">CF(0)</keyword>
<keyword id="KW-0150">Chloroplast</keyword>
<keyword id="KW-0375">Hydrogen ion transport</keyword>
<keyword id="KW-0406">Ion transport</keyword>
<keyword id="KW-0472">Membrane</keyword>
<keyword id="KW-0934">Plastid</keyword>
<keyword id="KW-0793">Thylakoid</keyword>
<keyword id="KW-0812">Transmembrane</keyword>
<keyword id="KW-1133">Transmembrane helix</keyword>
<keyword id="KW-0813">Transport</keyword>
<name>ATPF_HORVU</name>
<feature type="chain" id="PRO_0000368939" description="ATP synthase subunit b, chloroplastic">
    <location>
        <begin position="1"/>
        <end position="183"/>
    </location>
</feature>
<feature type="transmembrane region" description="Helical" evidence="1">
    <location>
        <begin position="27"/>
        <end position="49"/>
    </location>
</feature>
<dbReference type="EMBL" id="EF115541">
    <property type="protein sequence ID" value="ABK79409.1"/>
    <property type="molecule type" value="Genomic_DNA"/>
</dbReference>
<dbReference type="RefSeq" id="YP_010144421.1">
    <property type="nucleotide sequence ID" value="NC_056985.1"/>
</dbReference>
<dbReference type="RefSeq" id="YP_874649.1">
    <property type="nucleotide sequence ID" value="NC_008590.1"/>
</dbReference>
<dbReference type="SMR" id="A1E9I7"/>
<dbReference type="GeneID" id="4525126"/>
<dbReference type="GeneID" id="67140621"/>
<dbReference type="GO" id="GO:0009535">
    <property type="term" value="C:chloroplast thylakoid membrane"/>
    <property type="evidence" value="ECO:0007669"/>
    <property type="project" value="UniProtKB-SubCell"/>
</dbReference>
<dbReference type="GO" id="GO:0045259">
    <property type="term" value="C:proton-transporting ATP synthase complex"/>
    <property type="evidence" value="ECO:0007669"/>
    <property type="project" value="UniProtKB-KW"/>
</dbReference>
<dbReference type="GO" id="GO:0046933">
    <property type="term" value="F:proton-transporting ATP synthase activity, rotational mechanism"/>
    <property type="evidence" value="ECO:0007669"/>
    <property type="project" value="UniProtKB-UniRule"/>
</dbReference>
<dbReference type="CDD" id="cd06503">
    <property type="entry name" value="ATP-synt_Fo_b"/>
    <property type="match status" value="1"/>
</dbReference>
<dbReference type="HAMAP" id="MF_01398">
    <property type="entry name" value="ATP_synth_b_bprime"/>
    <property type="match status" value="1"/>
</dbReference>
<dbReference type="InterPro" id="IPR002146">
    <property type="entry name" value="ATP_synth_b/b'su_bac/chlpt"/>
</dbReference>
<dbReference type="PANTHER" id="PTHR34264">
    <property type="entry name" value="ATP SYNTHASE SUBUNIT B, CHLOROPLASTIC"/>
    <property type="match status" value="1"/>
</dbReference>
<dbReference type="PANTHER" id="PTHR34264:SF8">
    <property type="entry name" value="ATP SYNTHASE SUBUNIT B, CHLOROPLASTIC"/>
    <property type="match status" value="1"/>
</dbReference>
<dbReference type="Pfam" id="PF00430">
    <property type="entry name" value="ATP-synt_B"/>
    <property type="match status" value="1"/>
</dbReference>
<proteinExistence type="inferred from homology"/>